<proteinExistence type="inferred from homology"/>
<keyword id="KW-0028">Amino-acid biosynthesis</keyword>
<keyword id="KW-0055">Arginine biosynthesis</keyword>
<keyword id="KW-0067">ATP-binding</keyword>
<keyword id="KW-0963">Cytoplasm</keyword>
<keyword id="KW-0436">Ligase</keyword>
<keyword id="KW-0547">Nucleotide-binding</keyword>
<accession>Q3K7K0</accession>
<comment type="catalytic activity">
    <reaction evidence="1">
        <text>L-citrulline + L-aspartate + ATP = 2-(N(omega)-L-arginino)succinate + AMP + diphosphate + H(+)</text>
        <dbReference type="Rhea" id="RHEA:10932"/>
        <dbReference type="ChEBI" id="CHEBI:15378"/>
        <dbReference type="ChEBI" id="CHEBI:29991"/>
        <dbReference type="ChEBI" id="CHEBI:30616"/>
        <dbReference type="ChEBI" id="CHEBI:33019"/>
        <dbReference type="ChEBI" id="CHEBI:57472"/>
        <dbReference type="ChEBI" id="CHEBI:57743"/>
        <dbReference type="ChEBI" id="CHEBI:456215"/>
        <dbReference type="EC" id="6.3.4.5"/>
    </reaction>
</comment>
<comment type="pathway">
    <text evidence="1">Amino-acid biosynthesis; L-arginine biosynthesis; L-arginine from L-ornithine and carbamoyl phosphate: step 2/3.</text>
</comment>
<comment type="subunit">
    <text evidence="1">Homotetramer.</text>
</comment>
<comment type="subcellular location">
    <subcellularLocation>
        <location evidence="1">Cytoplasm</location>
    </subcellularLocation>
</comment>
<comment type="similarity">
    <text evidence="1">Belongs to the argininosuccinate synthase family. Type 1 subfamily.</text>
</comment>
<sequence>MADVNKVVLAYSGGLDTSVILKWLQDTYNCEVVTFTADLGQGEEVEPARAKAQAMGVKEIYIDDLREEFVRDFVFPMFRANTVYEGEYLLGTSIARPLIAKRLIEIANETGADAISHGATGKGNDQVRFELGAYALKPGVKVIAPWREWDLLSREKLMDYAEKHAIPIERHGKKKSPYSMDANLLHISYEGGVLEDTWTEHEEDMWRWTVSPEKAPDTPQYLELTYRNGDIVALDGVEMTPATVLATLNRIGGEHGIGRLDIVENRYVGMKSRGCYETPGGTIMLRAHRAIESITLDREVAHLKDELMPKYASLIYTGYWWSPERLMLQQMIDASQVNVNGVVRLKLYKGNVIVTGRKSDDSLFDANIATFEEDGGAYNQADAAGFIKLNALRMRIAANKGRKLF</sequence>
<dbReference type="EC" id="6.3.4.5" evidence="1"/>
<dbReference type="EMBL" id="CP000094">
    <property type="protein sequence ID" value="ABA76254.1"/>
    <property type="molecule type" value="Genomic_DNA"/>
</dbReference>
<dbReference type="RefSeq" id="WP_011335737.1">
    <property type="nucleotide sequence ID" value="NC_007492.2"/>
</dbReference>
<dbReference type="SMR" id="Q3K7K0"/>
<dbReference type="KEGG" id="pfo:Pfl01_4517"/>
<dbReference type="eggNOG" id="COG0137">
    <property type="taxonomic scope" value="Bacteria"/>
</dbReference>
<dbReference type="HOGENOM" id="CLU_032784_4_2_6"/>
<dbReference type="UniPathway" id="UPA00068">
    <property type="reaction ID" value="UER00113"/>
</dbReference>
<dbReference type="Proteomes" id="UP000002704">
    <property type="component" value="Chromosome"/>
</dbReference>
<dbReference type="GO" id="GO:0005737">
    <property type="term" value="C:cytoplasm"/>
    <property type="evidence" value="ECO:0007669"/>
    <property type="project" value="UniProtKB-SubCell"/>
</dbReference>
<dbReference type="GO" id="GO:0004055">
    <property type="term" value="F:argininosuccinate synthase activity"/>
    <property type="evidence" value="ECO:0007669"/>
    <property type="project" value="UniProtKB-UniRule"/>
</dbReference>
<dbReference type="GO" id="GO:0005524">
    <property type="term" value="F:ATP binding"/>
    <property type="evidence" value="ECO:0007669"/>
    <property type="project" value="UniProtKB-UniRule"/>
</dbReference>
<dbReference type="GO" id="GO:0000053">
    <property type="term" value="P:argininosuccinate metabolic process"/>
    <property type="evidence" value="ECO:0007669"/>
    <property type="project" value="TreeGrafter"/>
</dbReference>
<dbReference type="GO" id="GO:0006526">
    <property type="term" value="P:L-arginine biosynthetic process"/>
    <property type="evidence" value="ECO:0007669"/>
    <property type="project" value="UniProtKB-UniRule"/>
</dbReference>
<dbReference type="GO" id="GO:0000050">
    <property type="term" value="P:urea cycle"/>
    <property type="evidence" value="ECO:0007669"/>
    <property type="project" value="TreeGrafter"/>
</dbReference>
<dbReference type="CDD" id="cd01999">
    <property type="entry name" value="ASS"/>
    <property type="match status" value="1"/>
</dbReference>
<dbReference type="FunFam" id="1.20.5.470:FF:000001">
    <property type="entry name" value="Argininosuccinate synthase"/>
    <property type="match status" value="1"/>
</dbReference>
<dbReference type="FunFam" id="3.40.50.620:FF:000019">
    <property type="entry name" value="Argininosuccinate synthase"/>
    <property type="match status" value="1"/>
</dbReference>
<dbReference type="FunFam" id="3.90.1260.10:FF:000001">
    <property type="entry name" value="Argininosuccinate synthase"/>
    <property type="match status" value="1"/>
</dbReference>
<dbReference type="Gene3D" id="3.90.1260.10">
    <property type="entry name" value="Argininosuccinate synthetase, chain A, domain 2"/>
    <property type="match status" value="1"/>
</dbReference>
<dbReference type="Gene3D" id="3.40.50.620">
    <property type="entry name" value="HUPs"/>
    <property type="match status" value="1"/>
</dbReference>
<dbReference type="Gene3D" id="1.20.5.470">
    <property type="entry name" value="Single helix bin"/>
    <property type="match status" value="1"/>
</dbReference>
<dbReference type="HAMAP" id="MF_00005">
    <property type="entry name" value="Arg_succ_synth_type1"/>
    <property type="match status" value="1"/>
</dbReference>
<dbReference type="InterPro" id="IPR048268">
    <property type="entry name" value="Arginosuc_syn_C"/>
</dbReference>
<dbReference type="InterPro" id="IPR048267">
    <property type="entry name" value="Arginosuc_syn_N"/>
</dbReference>
<dbReference type="InterPro" id="IPR001518">
    <property type="entry name" value="Arginosuc_synth"/>
</dbReference>
<dbReference type="InterPro" id="IPR018223">
    <property type="entry name" value="Arginosuc_synth_CS"/>
</dbReference>
<dbReference type="InterPro" id="IPR023434">
    <property type="entry name" value="Arginosuc_synth_type_1_subfam"/>
</dbReference>
<dbReference type="InterPro" id="IPR024074">
    <property type="entry name" value="AS_cat/multimer_dom_body"/>
</dbReference>
<dbReference type="InterPro" id="IPR014729">
    <property type="entry name" value="Rossmann-like_a/b/a_fold"/>
</dbReference>
<dbReference type="NCBIfam" id="TIGR00032">
    <property type="entry name" value="argG"/>
    <property type="match status" value="1"/>
</dbReference>
<dbReference type="NCBIfam" id="NF001770">
    <property type="entry name" value="PRK00509.1"/>
    <property type="match status" value="1"/>
</dbReference>
<dbReference type="PANTHER" id="PTHR11587">
    <property type="entry name" value="ARGININOSUCCINATE SYNTHASE"/>
    <property type="match status" value="1"/>
</dbReference>
<dbReference type="PANTHER" id="PTHR11587:SF2">
    <property type="entry name" value="ARGININOSUCCINATE SYNTHASE"/>
    <property type="match status" value="1"/>
</dbReference>
<dbReference type="Pfam" id="PF20979">
    <property type="entry name" value="Arginosuc_syn_C"/>
    <property type="match status" value="1"/>
</dbReference>
<dbReference type="Pfam" id="PF00764">
    <property type="entry name" value="Arginosuc_synth"/>
    <property type="match status" value="1"/>
</dbReference>
<dbReference type="SUPFAM" id="SSF52402">
    <property type="entry name" value="Adenine nucleotide alpha hydrolases-like"/>
    <property type="match status" value="1"/>
</dbReference>
<dbReference type="SUPFAM" id="SSF69864">
    <property type="entry name" value="Argininosuccinate synthetase, C-terminal domain"/>
    <property type="match status" value="1"/>
</dbReference>
<dbReference type="PROSITE" id="PS00564">
    <property type="entry name" value="ARGININOSUCCIN_SYN_1"/>
    <property type="match status" value="1"/>
</dbReference>
<dbReference type="PROSITE" id="PS00565">
    <property type="entry name" value="ARGININOSUCCIN_SYN_2"/>
    <property type="match status" value="1"/>
</dbReference>
<name>ASSY_PSEPF</name>
<protein>
    <recommendedName>
        <fullName evidence="1">Argininosuccinate synthase</fullName>
        <ecNumber evidence="1">6.3.4.5</ecNumber>
    </recommendedName>
    <alternativeName>
        <fullName evidence="1">Citrulline--aspartate ligase</fullName>
    </alternativeName>
</protein>
<gene>
    <name evidence="1" type="primary">argG</name>
    <name type="ordered locus">Pfl01_4517</name>
</gene>
<reference key="1">
    <citation type="journal article" date="2009" name="Genome Biol.">
        <title>Genomic and genetic analyses of diversity and plant interactions of Pseudomonas fluorescens.</title>
        <authorList>
            <person name="Silby M.W."/>
            <person name="Cerdeno-Tarraga A.M."/>
            <person name="Vernikos G.S."/>
            <person name="Giddens S.R."/>
            <person name="Jackson R.W."/>
            <person name="Preston G.M."/>
            <person name="Zhang X.-X."/>
            <person name="Moon C.D."/>
            <person name="Gehrig S.M."/>
            <person name="Godfrey S.A.C."/>
            <person name="Knight C.G."/>
            <person name="Malone J.G."/>
            <person name="Robinson Z."/>
            <person name="Spiers A.J."/>
            <person name="Harris S."/>
            <person name="Challis G.L."/>
            <person name="Yaxley A.M."/>
            <person name="Harris D."/>
            <person name="Seeger K."/>
            <person name="Murphy L."/>
            <person name="Rutter S."/>
            <person name="Squares R."/>
            <person name="Quail M.A."/>
            <person name="Saunders E."/>
            <person name="Mavromatis K."/>
            <person name="Brettin T.S."/>
            <person name="Bentley S.D."/>
            <person name="Hothersall J."/>
            <person name="Stephens E."/>
            <person name="Thomas C.M."/>
            <person name="Parkhill J."/>
            <person name="Levy S.B."/>
            <person name="Rainey P.B."/>
            <person name="Thomson N.R."/>
        </authorList>
    </citation>
    <scope>NUCLEOTIDE SEQUENCE [LARGE SCALE GENOMIC DNA]</scope>
    <source>
        <strain>Pf0-1</strain>
    </source>
</reference>
<evidence type="ECO:0000255" key="1">
    <source>
        <dbReference type="HAMAP-Rule" id="MF_00005"/>
    </source>
</evidence>
<feature type="chain" id="PRO_0000263955" description="Argininosuccinate synthase">
    <location>
        <begin position="1"/>
        <end position="405"/>
    </location>
</feature>
<feature type="binding site" evidence="1">
    <location>
        <begin position="10"/>
        <end position="18"/>
    </location>
    <ligand>
        <name>ATP</name>
        <dbReference type="ChEBI" id="CHEBI:30616"/>
    </ligand>
</feature>
<feature type="binding site" evidence="1">
    <location>
        <position position="37"/>
    </location>
    <ligand>
        <name>ATP</name>
        <dbReference type="ChEBI" id="CHEBI:30616"/>
    </ligand>
</feature>
<feature type="binding site" evidence="1">
    <location>
        <position position="88"/>
    </location>
    <ligand>
        <name>L-citrulline</name>
        <dbReference type="ChEBI" id="CHEBI:57743"/>
    </ligand>
</feature>
<feature type="binding site" evidence="1">
    <location>
        <position position="93"/>
    </location>
    <ligand>
        <name>L-citrulline</name>
        <dbReference type="ChEBI" id="CHEBI:57743"/>
    </ligand>
</feature>
<feature type="binding site" evidence="1">
    <location>
        <position position="118"/>
    </location>
    <ligand>
        <name>ATP</name>
        <dbReference type="ChEBI" id="CHEBI:30616"/>
    </ligand>
</feature>
<feature type="binding site" evidence="1">
    <location>
        <position position="120"/>
    </location>
    <ligand>
        <name>L-aspartate</name>
        <dbReference type="ChEBI" id="CHEBI:29991"/>
    </ligand>
</feature>
<feature type="binding site" evidence="1">
    <location>
        <position position="124"/>
    </location>
    <ligand>
        <name>L-aspartate</name>
        <dbReference type="ChEBI" id="CHEBI:29991"/>
    </ligand>
</feature>
<feature type="binding site" evidence="1">
    <location>
        <position position="124"/>
    </location>
    <ligand>
        <name>L-citrulline</name>
        <dbReference type="ChEBI" id="CHEBI:57743"/>
    </ligand>
</feature>
<feature type="binding site" evidence="1">
    <location>
        <position position="125"/>
    </location>
    <ligand>
        <name>L-aspartate</name>
        <dbReference type="ChEBI" id="CHEBI:29991"/>
    </ligand>
</feature>
<feature type="binding site" evidence="1">
    <location>
        <position position="128"/>
    </location>
    <ligand>
        <name>L-citrulline</name>
        <dbReference type="ChEBI" id="CHEBI:57743"/>
    </ligand>
</feature>
<feature type="binding site" evidence="1">
    <location>
        <position position="179"/>
    </location>
    <ligand>
        <name>L-citrulline</name>
        <dbReference type="ChEBI" id="CHEBI:57743"/>
    </ligand>
</feature>
<feature type="binding site" evidence="1">
    <location>
        <position position="188"/>
    </location>
    <ligand>
        <name>L-citrulline</name>
        <dbReference type="ChEBI" id="CHEBI:57743"/>
    </ligand>
</feature>
<feature type="binding site" evidence="1">
    <location>
        <position position="264"/>
    </location>
    <ligand>
        <name>L-citrulline</name>
        <dbReference type="ChEBI" id="CHEBI:57743"/>
    </ligand>
</feature>
<feature type="binding site" evidence="1">
    <location>
        <position position="276"/>
    </location>
    <ligand>
        <name>L-citrulline</name>
        <dbReference type="ChEBI" id="CHEBI:57743"/>
    </ligand>
</feature>
<organism>
    <name type="scientific">Pseudomonas fluorescens (strain Pf0-1)</name>
    <dbReference type="NCBI Taxonomy" id="205922"/>
    <lineage>
        <taxon>Bacteria</taxon>
        <taxon>Pseudomonadati</taxon>
        <taxon>Pseudomonadota</taxon>
        <taxon>Gammaproteobacteria</taxon>
        <taxon>Pseudomonadales</taxon>
        <taxon>Pseudomonadaceae</taxon>
        <taxon>Pseudomonas</taxon>
    </lineage>
</organism>